<reference key="1">
    <citation type="journal article" date="2005" name="PLoS Biol.">
        <title>The genome sequence of Rickettsia felis identifies the first putative conjugative plasmid in an obligate intracellular parasite.</title>
        <authorList>
            <person name="Ogata H."/>
            <person name="Renesto P."/>
            <person name="Audic S."/>
            <person name="Robert C."/>
            <person name="Blanc G."/>
            <person name="Fournier P.-E."/>
            <person name="Parinello H."/>
            <person name="Claverie J.-M."/>
            <person name="Raoult D."/>
        </authorList>
    </citation>
    <scope>NUCLEOTIDE SEQUENCE [LARGE SCALE GENOMIC DNA]</scope>
    <source>
        <strain>ATCC VR-1525 / URRWXCal2</strain>
    </source>
</reference>
<evidence type="ECO:0000255" key="1">
    <source>
        <dbReference type="HAMAP-Rule" id="MF_01371"/>
    </source>
</evidence>
<evidence type="ECO:0000305" key="2"/>
<proteinExistence type="inferred from homology"/>
<comment type="subunit">
    <text evidence="1">Part of the 50S ribosomal subunit.</text>
</comment>
<comment type="similarity">
    <text evidence="1">Belongs to the universal ribosomal protein uL30 family.</text>
</comment>
<comment type="sequence caution" evidence="2">
    <conflict type="erroneous initiation">
        <sequence resource="EMBL-CDS" id="AAY61147"/>
    </conflict>
</comment>
<name>RL30_RICFE</name>
<organism>
    <name type="scientific">Rickettsia felis (strain ATCC VR-1525 / URRWXCal2)</name>
    <name type="common">Rickettsia azadi</name>
    <dbReference type="NCBI Taxonomy" id="315456"/>
    <lineage>
        <taxon>Bacteria</taxon>
        <taxon>Pseudomonadati</taxon>
        <taxon>Pseudomonadota</taxon>
        <taxon>Alphaproteobacteria</taxon>
        <taxon>Rickettsiales</taxon>
        <taxon>Rickettsiaceae</taxon>
        <taxon>Rickettsieae</taxon>
        <taxon>Rickettsia</taxon>
        <taxon>spotted fever group</taxon>
    </lineage>
</organism>
<feature type="chain" id="PRO_0000274840" description="Large ribosomal subunit protein uL30">
    <location>
        <begin position="1"/>
        <end position="63"/>
    </location>
</feature>
<protein>
    <recommendedName>
        <fullName evidence="1">Large ribosomal subunit protein uL30</fullName>
    </recommendedName>
    <alternativeName>
        <fullName evidence="2">50S ribosomal protein L30</fullName>
    </alternativeName>
</protein>
<gene>
    <name evidence="1" type="primary">rpmD</name>
    <name type="ordered locus">RF_0296</name>
</gene>
<dbReference type="EMBL" id="CP000053">
    <property type="protein sequence ID" value="AAY61147.1"/>
    <property type="status" value="ALT_INIT"/>
    <property type="molecule type" value="Genomic_DNA"/>
</dbReference>
<dbReference type="SMR" id="Q4UMR1"/>
<dbReference type="STRING" id="315456.RF_0296"/>
<dbReference type="KEGG" id="rfe:RF_0296"/>
<dbReference type="eggNOG" id="COG1841">
    <property type="taxonomic scope" value="Bacteria"/>
</dbReference>
<dbReference type="HOGENOM" id="CLU_131047_1_5_5"/>
<dbReference type="OrthoDB" id="9812790at2"/>
<dbReference type="Proteomes" id="UP000008548">
    <property type="component" value="Chromosome"/>
</dbReference>
<dbReference type="GO" id="GO:0022625">
    <property type="term" value="C:cytosolic large ribosomal subunit"/>
    <property type="evidence" value="ECO:0007669"/>
    <property type="project" value="TreeGrafter"/>
</dbReference>
<dbReference type="GO" id="GO:0003735">
    <property type="term" value="F:structural constituent of ribosome"/>
    <property type="evidence" value="ECO:0007669"/>
    <property type="project" value="InterPro"/>
</dbReference>
<dbReference type="GO" id="GO:0006412">
    <property type="term" value="P:translation"/>
    <property type="evidence" value="ECO:0007669"/>
    <property type="project" value="UniProtKB-UniRule"/>
</dbReference>
<dbReference type="CDD" id="cd01658">
    <property type="entry name" value="Ribosomal_L30"/>
    <property type="match status" value="1"/>
</dbReference>
<dbReference type="Gene3D" id="3.30.1390.20">
    <property type="entry name" value="Ribosomal protein L30, ferredoxin-like fold domain"/>
    <property type="match status" value="1"/>
</dbReference>
<dbReference type="HAMAP" id="MF_01371_B">
    <property type="entry name" value="Ribosomal_uL30_B"/>
    <property type="match status" value="1"/>
</dbReference>
<dbReference type="InterPro" id="IPR036919">
    <property type="entry name" value="Ribo_uL30_ferredoxin-like_sf"/>
</dbReference>
<dbReference type="InterPro" id="IPR005996">
    <property type="entry name" value="Ribosomal_uL30_bac-type"/>
</dbReference>
<dbReference type="InterPro" id="IPR016082">
    <property type="entry name" value="Ribosomal_uL30_ferredoxin-like"/>
</dbReference>
<dbReference type="NCBIfam" id="TIGR01308">
    <property type="entry name" value="rpmD_bact"/>
    <property type="match status" value="1"/>
</dbReference>
<dbReference type="PANTHER" id="PTHR15892:SF2">
    <property type="entry name" value="LARGE RIBOSOMAL SUBUNIT PROTEIN UL30M"/>
    <property type="match status" value="1"/>
</dbReference>
<dbReference type="PANTHER" id="PTHR15892">
    <property type="entry name" value="MITOCHONDRIAL RIBOSOMAL PROTEIN L30"/>
    <property type="match status" value="1"/>
</dbReference>
<dbReference type="Pfam" id="PF00327">
    <property type="entry name" value="Ribosomal_L30"/>
    <property type="match status" value="1"/>
</dbReference>
<dbReference type="PIRSF" id="PIRSF002211">
    <property type="entry name" value="Ribosomal_L30_bac-type"/>
    <property type="match status" value="1"/>
</dbReference>
<dbReference type="SUPFAM" id="SSF55129">
    <property type="entry name" value="Ribosomal protein L30p/L7e"/>
    <property type="match status" value="1"/>
</dbReference>
<keyword id="KW-0687">Ribonucleoprotein</keyword>
<keyword id="KW-0689">Ribosomal protein</keyword>
<accession>Q4UMR1</accession>
<sequence length="63" mass="7149">MNNKINNIKITQVKSAIGRKYDQRLTLVGLGLNKINKSVILENTNSIKGMVEKVKHLLKIENM</sequence>